<feature type="chain" id="PRO_1000055042" description="Small ribosomal subunit protein uS17">
    <location>
        <begin position="1"/>
        <end position="107"/>
    </location>
</feature>
<accession>A5IM92</accession>
<protein>
    <recommendedName>
        <fullName evidence="1">Small ribosomal subunit protein uS17</fullName>
    </recommendedName>
    <alternativeName>
        <fullName evidence="2">30S ribosomal protein S17</fullName>
    </alternativeName>
</protein>
<name>RS17_THEP1</name>
<keyword id="KW-0687">Ribonucleoprotein</keyword>
<keyword id="KW-0689">Ribosomal protein</keyword>
<keyword id="KW-0694">RNA-binding</keyword>
<keyword id="KW-0699">rRNA-binding</keyword>
<evidence type="ECO:0000255" key="1">
    <source>
        <dbReference type="HAMAP-Rule" id="MF_01345"/>
    </source>
</evidence>
<evidence type="ECO:0000305" key="2"/>
<gene>
    <name evidence="1" type="primary">rpsQ</name>
    <name type="ordered locus">Tpet_1301</name>
</gene>
<organism>
    <name type="scientific">Thermotoga petrophila (strain ATCC BAA-488 / DSM 13995 / JCM 10881 / RKU-1)</name>
    <dbReference type="NCBI Taxonomy" id="390874"/>
    <lineage>
        <taxon>Bacteria</taxon>
        <taxon>Thermotogati</taxon>
        <taxon>Thermotogota</taxon>
        <taxon>Thermotogae</taxon>
        <taxon>Thermotogales</taxon>
        <taxon>Thermotogaceae</taxon>
        <taxon>Thermotoga</taxon>
    </lineage>
</organism>
<comment type="function">
    <text evidence="1">One of the primary rRNA binding proteins, it binds specifically to the 5'-end of 16S ribosomal RNA.</text>
</comment>
<comment type="subunit">
    <text evidence="1">Part of the 30S ribosomal subunit.</text>
</comment>
<comment type="similarity">
    <text evidence="1">Belongs to the universal ribosomal protein uS17 family.</text>
</comment>
<dbReference type="EMBL" id="CP000702">
    <property type="protein sequence ID" value="ABQ47315.1"/>
    <property type="molecule type" value="Genomic_DNA"/>
</dbReference>
<dbReference type="RefSeq" id="WP_008195006.1">
    <property type="nucleotide sequence ID" value="NC_009486.1"/>
</dbReference>
<dbReference type="SMR" id="A5IM92"/>
<dbReference type="STRING" id="390874.Tpet_1301"/>
<dbReference type="KEGG" id="tpt:Tpet_1301"/>
<dbReference type="eggNOG" id="COG0186">
    <property type="taxonomic scope" value="Bacteria"/>
</dbReference>
<dbReference type="HOGENOM" id="CLU_073626_1_2_0"/>
<dbReference type="Proteomes" id="UP000006558">
    <property type="component" value="Chromosome"/>
</dbReference>
<dbReference type="GO" id="GO:0022627">
    <property type="term" value="C:cytosolic small ribosomal subunit"/>
    <property type="evidence" value="ECO:0007669"/>
    <property type="project" value="TreeGrafter"/>
</dbReference>
<dbReference type="GO" id="GO:0019843">
    <property type="term" value="F:rRNA binding"/>
    <property type="evidence" value="ECO:0007669"/>
    <property type="project" value="UniProtKB-UniRule"/>
</dbReference>
<dbReference type="GO" id="GO:0003735">
    <property type="term" value="F:structural constituent of ribosome"/>
    <property type="evidence" value="ECO:0007669"/>
    <property type="project" value="InterPro"/>
</dbReference>
<dbReference type="GO" id="GO:0006412">
    <property type="term" value="P:translation"/>
    <property type="evidence" value="ECO:0007669"/>
    <property type="project" value="UniProtKB-UniRule"/>
</dbReference>
<dbReference type="CDD" id="cd00364">
    <property type="entry name" value="Ribosomal_uS17"/>
    <property type="match status" value="1"/>
</dbReference>
<dbReference type="FunFam" id="2.40.50.140:FF:000204">
    <property type="entry name" value="30S ribosomal protein S17"/>
    <property type="match status" value="1"/>
</dbReference>
<dbReference type="Gene3D" id="2.40.50.140">
    <property type="entry name" value="Nucleic acid-binding proteins"/>
    <property type="match status" value="1"/>
</dbReference>
<dbReference type="HAMAP" id="MF_01345_B">
    <property type="entry name" value="Ribosomal_uS17_B"/>
    <property type="match status" value="1"/>
</dbReference>
<dbReference type="InterPro" id="IPR012340">
    <property type="entry name" value="NA-bd_OB-fold"/>
</dbReference>
<dbReference type="InterPro" id="IPR000266">
    <property type="entry name" value="Ribosomal_uS17"/>
</dbReference>
<dbReference type="InterPro" id="IPR019984">
    <property type="entry name" value="Ribosomal_uS17_bact/chlr"/>
</dbReference>
<dbReference type="InterPro" id="IPR019979">
    <property type="entry name" value="Ribosomal_uS17_CS"/>
</dbReference>
<dbReference type="NCBIfam" id="NF004123">
    <property type="entry name" value="PRK05610.1"/>
    <property type="match status" value="1"/>
</dbReference>
<dbReference type="NCBIfam" id="TIGR03635">
    <property type="entry name" value="uS17_bact"/>
    <property type="match status" value="1"/>
</dbReference>
<dbReference type="PANTHER" id="PTHR10744">
    <property type="entry name" value="40S RIBOSOMAL PROTEIN S11 FAMILY MEMBER"/>
    <property type="match status" value="1"/>
</dbReference>
<dbReference type="PANTHER" id="PTHR10744:SF1">
    <property type="entry name" value="SMALL RIBOSOMAL SUBUNIT PROTEIN US17M"/>
    <property type="match status" value="1"/>
</dbReference>
<dbReference type="Pfam" id="PF00366">
    <property type="entry name" value="Ribosomal_S17"/>
    <property type="match status" value="1"/>
</dbReference>
<dbReference type="PRINTS" id="PR00973">
    <property type="entry name" value="RIBOSOMALS17"/>
</dbReference>
<dbReference type="SUPFAM" id="SSF50249">
    <property type="entry name" value="Nucleic acid-binding proteins"/>
    <property type="match status" value="1"/>
</dbReference>
<dbReference type="PROSITE" id="PS00056">
    <property type="entry name" value="RIBOSOMAL_S17"/>
    <property type="match status" value="1"/>
</dbReference>
<reference key="1">
    <citation type="submission" date="2007-05" db="EMBL/GenBank/DDBJ databases">
        <title>Complete sequence of Thermotoga petrophila RKU-1.</title>
        <authorList>
            <consortium name="US DOE Joint Genome Institute"/>
            <person name="Copeland A."/>
            <person name="Lucas S."/>
            <person name="Lapidus A."/>
            <person name="Barry K."/>
            <person name="Glavina del Rio T."/>
            <person name="Dalin E."/>
            <person name="Tice H."/>
            <person name="Pitluck S."/>
            <person name="Sims D."/>
            <person name="Brettin T."/>
            <person name="Bruce D."/>
            <person name="Detter J.C."/>
            <person name="Han C."/>
            <person name="Tapia R."/>
            <person name="Schmutz J."/>
            <person name="Larimer F."/>
            <person name="Land M."/>
            <person name="Hauser L."/>
            <person name="Kyrpides N."/>
            <person name="Mikhailova N."/>
            <person name="Nelson K."/>
            <person name="Gogarten J.P."/>
            <person name="Noll K."/>
            <person name="Richardson P."/>
        </authorList>
    </citation>
    <scope>NUCLEOTIDE SEQUENCE [LARGE SCALE GENOMIC DNA]</scope>
    <source>
        <strain>ATCC BAA-488 / DSM 13995 / JCM 10881 / RKU-1</strain>
    </source>
</reference>
<sequence length="107" mass="12613">MPRKRLTGIVVSDKMDKTVVVAVEKLVQHPIYKKYVKRTKKYHAHDERNECKIGDVVEIEETRPLSKTKRWRVVRIIQRFEPERVLKEEEDIQEEIEAVEGKGGVES</sequence>
<proteinExistence type="inferred from homology"/>